<organism>
    <name type="scientific">Rhodopirellula baltica (strain DSM 10527 / NCIMB 13988 / SH1)</name>
    <dbReference type="NCBI Taxonomy" id="243090"/>
    <lineage>
        <taxon>Bacteria</taxon>
        <taxon>Pseudomonadati</taxon>
        <taxon>Planctomycetota</taxon>
        <taxon>Planctomycetia</taxon>
        <taxon>Pirellulales</taxon>
        <taxon>Pirellulaceae</taxon>
        <taxon>Rhodopirellula</taxon>
    </lineage>
</organism>
<name>RSMG_RHOBA</name>
<reference key="1">
    <citation type="journal article" date="2003" name="Proc. Natl. Acad. Sci. U.S.A.">
        <title>Complete genome sequence of the marine planctomycete Pirellula sp. strain 1.</title>
        <authorList>
            <person name="Gloeckner F.O."/>
            <person name="Kube M."/>
            <person name="Bauer M."/>
            <person name="Teeling H."/>
            <person name="Lombardot T."/>
            <person name="Ludwig W."/>
            <person name="Gade D."/>
            <person name="Beck A."/>
            <person name="Borzym K."/>
            <person name="Heitmann K."/>
            <person name="Rabus R."/>
            <person name="Schlesner H."/>
            <person name="Amann R."/>
            <person name="Reinhardt R."/>
        </authorList>
    </citation>
    <scope>NUCLEOTIDE SEQUENCE [LARGE SCALE GENOMIC DNA]</scope>
    <source>
        <strain>DSM 10527 / NCIMB 13988 / SH1</strain>
    </source>
</reference>
<dbReference type="EC" id="2.1.1.-" evidence="1"/>
<dbReference type="EMBL" id="BX294146">
    <property type="protein sequence ID" value="CAD75664.1"/>
    <property type="molecule type" value="Genomic_DNA"/>
</dbReference>
<dbReference type="RefSeq" id="NP_868112.1">
    <property type="nucleotide sequence ID" value="NC_005027.1"/>
</dbReference>
<dbReference type="RefSeq" id="WP_007334161.1">
    <property type="nucleotide sequence ID" value="NC_005027.1"/>
</dbReference>
<dbReference type="SMR" id="Q7UMW0"/>
<dbReference type="FunCoup" id="Q7UMW0">
    <property type="interactions" value="444"/>
</dbReference>
<dbReference type="STRING" id="243090.RB7945"/>
<dbReference type="EnsemblBacteria" id="CAD75664">
    <property type="protein sequence ID" value="CAD75664"/>
    <property type="gene ID" value="RB7945"/>
</dbReference>
<dbReference type="KEGG" id="rba:RB7945"/>
<dbReference type="PATRIC" id="fig|243090.15.peg.3840"/>
<dbReference type="eggNOG" id="COG0357">
    <property type="taxonomic scope" value="Bacteria"/>
</dbReference>
<dbReference type="HOGENOM" id="CLU_065341_0_1_0"/>
<dbReference type="InParanoid" id="Q7UMW0"/>
<dbReference type="OrthoDB" id="9808773at2"/>
<dbReference type="Proteomes" id="UP000001025">
    <property type="component" value="Chromosome"/>
</dbReference>
<dbReference type="GO" id="GO:0005829">
    <property type="term" value="C:cytosol"/>
    <property type="evidence" value="ECO:0000318"/>
    <property type="project" value="GO_Central"/>
</dbReference>
<dbReference type="GO" id="GO:0070043">
    <property type="term" value="F:rRNA (guanine-N7-)-methyltransferase activity"/>
    <property type="evidence" value="ECO:0000318"/>
    <property type="project" value="GO_Central"/>
</dbReference>
<dbReference type="FunFam" id="3.40.50.150:FF:000757">
    <property type="entry name" value="Ribosomal RNA small subunit methyltransferase G"/>
    <property type="match status" value="1"/>
</dbReference>
<dbReference type="Gene3D" id="3.40.50.150">
    <property type="entry name" value="Vaccinia Virus protein VP39"/>
    <property type="match status" value="1"/>
</dbReference>
<dbReference type="HAMAP" id="MF_00074">
    <property type="entry name" value="16SrRNA_methyltr_G"/>
    <property type="match status" value="1"/>
</dbReference>
<dbReference type="InterPro" id="IPR003682">
    <property type="entry name" value="rRNA_ssu_MeTfrase_G"/>
</dbReference>
<dbReference type="InterPro" id="IPR029063">
    <property type="entry name" value="SAM-dependent_MTases_sf"/>
</dbReference>
<dbReference type="NCBIfam" id="TIGR00138">
    <property type="entry name" value="rsmG_gidB"/>
    <property type="match status" value="1"/>
</dbReference>
<dbReference type="PANTHER" id="PTHR31760">
    <property type="entry name" value="S-ADENOSYL-L-METHIONINE-DEPENDENT METHYLTRANSFERASES SUPERFAMILY PROTEIN"/>
    <property type="match status" value="1"/>
</dbReference>
<dbReference type="PANTHER" id="PTHR31760:SF0">
    <property type="entry name" value="S-ADENOSYL-L-METHIONINE-DEPENDENT METHYLTRANSFERASES SUPERFAMILY PROTEIN"/>
    <property type="match status" value="1"/>
</dbReference>
<dbReference type="Pfam" id="PF02527">
    <property type="entry name" value="GidB"/>
    <property type="match status" value="1"/>
</dbReference>
<dbReference type="PIRSF" id="PIRSF003078">
    <property type="entry name" value="GidB"/>
    <property type="match status" value="1"/>
</dbReference>
<dbReference type="SUPFAM" id="SSF53335">
    <property type="entry name" value="S-adenosyl-L-methionine-dependent methyltransferases"/>
    <property type="match status" value="1"/>
</dbReference>
<accession>Q7UMW0</accession>
<sequence length="231" mass="25788">MIDAEFKTALEQFGLELDEPLGMSLQQYAQSLWRYNEQINLTRHTTWDLFVTRDLRDCLQLAQLIQPGEEVLDMGSGNGVPGIPLAMLRPDIDVALAESVGKRAKVLDELVTELNLPVPVYAARGEDLLEDFRFTTIVSRAVGSLLKFCRWVEPHWSQFDRLLLIKGPKWVDERGEARHHGVLKGLELRVVATYPLGSVAPELAEAEEGDSPEAADASRGVILELTKKNKG</sequence>
<keyword id="KW-0963">Cytoplasm</keyword>
<keyword id="KW-0489">Methyltransferase</keyword>
<keyword id="KW-1185">Reference proteome</keyword>
<keyword id="KW-0698">rRNA processing</keyword>
<keyword id="KW-0949">S-adenosyl-L-methionine</keyword>
<keyword id="KW-0808">Transferase</keyword>
<gene>
    <name evidence="1" type="primary">rsmG</name>
    <name type="ordered locus">RB7945</name>
</gene>
<feature type="chain" id="PRO_0000184315" description="Ribosomal RNA small subunit methyltransferase G">
    <location>
        <begin position="1"/>
        <end position="231"/>
    </location>
</feature>
<feature type="region of interest" description="Disordered" evidence="2">
    <location>
        <begin position="204"/>
        <end position="231"/>
    </location>
</feature>
<feature type="compositionally biased region" description="Acidic residues" evidence="2">
    <location>
        <begin position="204"/>
        <end position="213"/>
    </location>
</feature>
<feature type="binding site" evidence="1">
    <location>
        <position position="75"/>
    </location>
    <ligand>
        <name>S-adenosyl-L-methionine</name>
        <dbReference type="ChEBI" id="CHEBI:59789"/>
    </ligand>
</feature>
<feature type="binding site" evidence="1">
    <location>
        <begin position="125"/>
        <end position="126"/>
    </location>
    <ligand>
        <name>S-adenosyl-L-methionine</name>
        <dbReference type="ChEBI" id="CHEBI:59789"/>
    </ligand>
</feature>
<feature type="binding site" evidence="1">
    <location>
        <position position="140"/>
    </location>
    <ligand>
        <name>S-adenosyl-L-methionine</name>
        <dbReference type="ChEBI" id="CHEBI:59789"/>
    </ligand>
</feature>
<comment type="function">
    <text evidence="1">Specifically methylates the N7 position of a guanine in 16S rRNA.</text>
</comment>
<comment type="subcellular location">
    <subcellularLocation>
        <location evidence="1">Cytoplasm</location>
    </subcellularLocation>
</comment>
<comment type="similarity">
    <text evidence="1">Belongs to the methyltransferase superfamily. RNA methyltransferase RsmG family.</text>
</comment>
<protein>
    <recommendedName>
        <fullName evidence="1">Ribosomal RNA small subunit methyltransferase G</fullName>
        <ecNumber evidence="1">2.1.1.-</ecNumber>
    </recommendedName>
    <alternativeName>
        <fullName evidence="1">16S rRNA 7-methylguanosine methyltransferase</fullName>
        <shortName evidence="1">16S rRNA m7G methyltransferase</shortName>
    </alternativeName>
</protein>
<evidence type="ECO:0000255" key="1">
    <source>
        <dbReference type="HAMAP-Rule" id="MF_00074"/>
    </source>
</evidence>
<evidence type="ECO:0000256" key="2">
    <source>
        <dbReference type="SAM" id="MobiDB-lite"/>
    </source>
</evidence>
<proteinExistence type="inferred from homology"/>